<dbReference type="EC" id="7.6.2.-"/>
<dbReference type="EMBL" id="Z82044">
    <property type="protein sequence ID" value="CAB04797.1"/>
    <property type="status" value="ALT_INIT"/>
    <property type="molecule type" value="Genomic_DNA"/>
</dbReference>
<dbReference type="EMBL" id="AL009126">
    <property type="protein sequence ID" value="CAB12697.2"/>
    <property type="molecule type" value="Genomic_DNA"/>
</dbReference>
<dbReference type="PIR" id="G69815">
    <property type="entry name" value="G69815"/>
</dbReference>
<dbReference type="RefSeq" id="NP_388749.2">
    <property type="nucleotide sequence ID" value="NC_000964.3"/>
</dbReference>
<dbReference type="RefSeq" id="WP_009966836.1">
    <property type="nucleotide sequence ID" value="NZ_OZ025638.1"/>
</dbReference>
<dbReference type="SMR" id="P71082"/>
<dbReference type="FunCoup" id="P71082">
    <property type="interactions" value="517"/>
</dbReference>
<dbReference type="STRING" id="224308.BSU08690"/>
<dbReference type="PaxDb" id="224308-BSU08690"/>
<dbReference type="EnsemblBacteria" id="CAB12697">
    <property type="protein sequence ID" value="CAB12697"/>
    <property type="gene ID" value="BSU_08690"/>
</dbReference>
<dbReference type="GeneID" id="936200"/>
<dbReference type="KEGG" id="bsu:BSU08690"/>
<dbReference type="PATRIC" id="fig|224308.179.peg.937"/>
<dbReference type="eggNOG" id="COG1132">
    <property type="taxonomic scope" value="Bacteria"/>
</dbReference>
<dbReference type="InParanoid" id="P71082"/>
<dbReference type="OrthoDB" id="9770415at2"/>
<dbReference type="BioCyc" id="BSUB:BSU08690-MONOMER"/>
<dbReference type="Proteomes" id="UP000001570">
    <property type="component" value="Chromosome"/>
</dbReference>
<dbReference type="GO" id="GO:0005886">
    <property type="term" value="C:plasma membrane"/>
    <property type="evidence" value="ECO:0007669"/>
    <property type="project" value="UniProtKB-SubCell"/>
</dbReference>
<dbReference type="GO" id="GO:0140359">
    <property type="term" value="F:ABC-type transporter activity"/>
    <property type="evidence" value="ECO:0007669"/>
    <property type="project" value="InterPro"/>
</dbReference>
<dbReference type="GO" id="GO:0005524">
    <property type="term" value="F:ATP binding"/>
    <property type="evidence" value="ECO:0007669"/>
    <property type="project" value="UniProtKB-KW"/>
</dbReference>
<dbReference type="GO" id="GO:0016887">
    <property type="term" value="F:ATP hydrolysis activity"/>
    <property type="evidence" value="ECO:0007669"/>
    <property type="project" value="InterPro"/>
</dbReference>
<dbReference type="GO" id="GO:0042626">
    <property type="term" value="F:ATPase-coupled transmembrane transporter activity"/>
    <property type="evidence" value="ECO:0000318"/>
    <property type="project" value="GO_Central"/>
</dbReference>
<dbReference type="GO" id="GO:0055085">
    <property type="term" value="P:transmembrane transport"/>
    <property type="evidence" value="ECO:0000318"/>
    <property type="project" value="GO_Central"/>
</dbReference>
<dbReference type="CDD" id="cd18554">
    <property type="entry name" value="ABC_6TM_Sav1866_like"/>
    <property type="match status" value="1"/>
</dbReference>
<dbReference type="CDD" id="cd03251">
    <property type="entry name" value="ABCC_MsbA"/>
    <property type="match status" value="1"/>
</dbReference>
<dbReference type="FunFam" id="1.20.1560.10:FF:000069">
    <property type="entry name" value="Multidrug ABC transporter ATP-binding protein"/>
    <property type="match status" value="1"/>
</dbReference>
<dbReference type="FunFam" id="3.40.50.300:FF:000218">
    <property type="entry name" value="Multidrug ABC transporter ATP-binding protein"/>
    <property type="match status" value="1"/>
</dbReference>
<dbReference type="Gene3D" id="1.20.1560.10">
    <property type="entry name" value="ABC transporter type 1, transmembrane domain"/>
    <property type="match status" value="1"/>
</dbReference>
<dbReference type="Gene3D" id="3.40.50.300">
    <property type="entry name" value="P-loop containing nucleotide triphosphate hydrolases"/>
    <property type="match status" value="1"/>
</dbReference>
<dbReference type="InterPro" id="IPR003593">
    <property type="entry name" value="AAA+_ATPase"/>
</dbReference>
<dbReference type="InterPro" id="IPR011527">
    <property type="entry name" value="ABC1_TM_dom"/>
</dbReference>
<dbReference type="InterPro" id="IPR036640">
    <property type="entry name" value="ABC1_TM_sf"/>
</dbReference>
<dbReference type="InterPro" id="IPR003439">
    <property type="entry name" value="ABC_transporter-like_ATP-bd"/>
</dbReference>
<dbReference type="InterPro" id="IPR017871">
    <property type="entry name" value="ABC_transporter-like_CS"/>
</dbReference>
<dbReference type="InterPro" id="IPR027417">
    <property type="entry name" value="P-loop_NTPase"/>
</dbReference>
<dbReference type="InterPro" id="IPR039421">
    <property type="entry name" value="Type_1_exporter"/>
</dbReference>
<dbReference type="PANTHER" id="PTHR43394:SF1">
    <property type="entry name" value="ATP-BINDING CASSETTE SUB-FAMILY B MEMBER 10, MITOCHONDRIAL"/>
    <property type="match status" value="1"/>
</dbReference>
<dbReference type="PANTHER" id="PTHR43394">
    <property type="entry name" value="ATP-DEPENDENT PERMEASE MDL1, MITOCHONDRIAL"/>
    <property type="match status" value="1"/>
</dbReference>
<dbReference type="Pfam" id="PF00664">
    <property type="entry name" value="ABC_membrane"/>
    <property type="match status" value="1"/>
</dbReference>
<dbReference type="Pfam" id="PF00005">
    <property type="entry name" value="ABC_tran"/>
    <property type="match status" value="1"/>
</dbReference>
<dbReference type="SMART" id="SM00382">
    <property type="entry name" value="AAA"/>
    <property type="match status" value="1"/>
</dbReference>
<dbReference type="SUPFAM" id="SSF90123">
    <property type="entry name" value="ABC transporter transmembrane region"/>
    <property type="match status" value="1"/>
</dbReference>
<dbReference type="SUPFAM" id="SSF52540">
    <property type="entry name" value="P-loop containing nucleoside triphosphate hydrolases"/>
    <property type="match status" value="1"/>
</dbReference>
<dbReference type="PROSITE" id="PS50929">
    <property type="entry name" value="ABC_TM1F"/>
    <property type="match status" value="1"/>
</dbReference>
<dbReference type="PROSITE" id="PS00211">
    <property type="entry name" value="ABC_TRANSPORTER_1"/>
    <property type="match status" value="1"/>
</dbReference>
<dbReference type="PROSITE" id="PS50893">
    <property type="entry name" value="ABC_TRANSPORTER_2"/>
    <property type="match status" value="1"/>
</dbReference>
<reference key="1">
    <citation type="journal article" date="1997" name="Microbiology">
        <title>The Bacillus subtilis 168 chromosome from sspE to katA.</title>
        <authorList>
            <person name="Cummings N.J."/>
            <person name="Connerton I.F."/>
        </authorList>
    </citation>
    <scope>NUCLEOTIDE SEQUENCE [GENOMIC DNA]</scope>
    <source>
        <strain>168</strain>
    </source>
</reference>
<reference key="2">
    <citation type="journal article" date="1997" name="Nature">
        <title>The complete genome sequence of the Gram-positive bacterium Bacillus subtilis.</title>
        <authorList>
            <person name="Kunst F."/>
            <person name="Ogasawara N."/>
            <person name="Moszer I."/>
            <person name="Albertini A.M."/>
            <person name="Alloni G."/>
            <person name="Azevedo V."/>
            <person name="Bertero M.G."/>
            <person name="Bessieres P."/>
            <person name="Bolotin A."/>
            <person name="Borchert S."/>
            <person name="Borriss R."/>
            <person name="Boursier L."/>
            <person name="Brans A."/>
            <person name="Braun M."/>
            <person name="Brignell S.C."/>
            <person name="Bron S."/>
            <person name="Brouillet S."/>
            <person name="Bruschi C.V."/>
            <person name="Caldwell B."/>
            <person name="Capuano V."/>
            <person name="Carter N.M."/>
            <person name="Choi S.-K."/>
            <person name="Codani J.-J."/>
            <person name="Connerton I.F."/>
            <person name="Cummings N.J."/>
            <person name="Daniel R.A."/>
            <person name="Denizot F."/>
            <person name="Devine K.M."/>
            <person name="Duesterhoeft A."/>
            <person name="Ehrlich S.D."/>
            <person name="Emmerson P.T."/>
            <person name="Entian K.-D."/>
            <person name="Errington J."/>
            <person name="Fabret C."/>
            <person name="Ferrari E."/>
            <person name="Foulger D."/>
            <person name="Fritz C."/>
            <person name="Fujita M."/>
            <person name="Fujita Y."/>
            <person name="Fuma S."/>
            <person name="Galizzi A."/>
            <person name="Galleron N."/>
            <person name="Ghim S.-Y."/>
            <person name="Glaser P."/>
            <person name="Goffeau A."/>
            <person name="Golightly E.J."/>
            <person name="Grandi G."/>
            <person name="Guiseppi G."/>
            <person name="Guy B.J."/>
            <person name="Haga K."/>
            <person name="Haiech J."/>
            <person name="Harwood C.R."/>
            <person name="Henaut A."/>
            <person name="Hilbert H."/>
            <person name="Holsappel S."/>
            <person name="Hosono S."/>
            <person name="Hullo M.-F."/>
            <person name="Itaya M."/>
            <person name="Jones L.-M."/>
            <person name="Joris B."/>
            <person name="Karamata D."/>
            <person name="Kasahara Y."/>
            <person name="Klaerr-Blanchard M."/>
            <person name="Klein C."/>
            <person name="Kobayashi Y."/>
            <person name="Koetter P."/>
            <person name="Koningstein G."/>
            <person name="Krogh S."/>
            <person name="Kumano M."/>
            <person name="Kurita K."/>
            <person name="Lapidus A."/>
            <person name="Lardinois S."/>
            <person name="Lauber J."/>
            <person name="Lazarevic V."/>
            <person name="Lee S.-M."/>
            <person name="Levine A."/>
            <person name="Liu H."/>
            <person name="Masuda S."/>
            <person name="Mauel C."/>
            <person name="Medigue C."/>
            <person name="Medina N."/>
            <person name="Mellado R.P."/>
            <person name="Mizuno M."/>
            <person name="Moestl D."/>
            <person name="Nakai S."/>
            <person name="Noback M."/>
            <person name="Noone D."/>
            <person name="O'Reilly M."/>
            <person name="Ogawa K."/>
            <person name="Ogiwara A."/>
            <person name="Oudega B."/>
            <person name="Park S.-H."/>
            <person name="Parro V."/>
            <person name="Pohl T.M."/>
            <person name="Portetelle D."/>
            <person name="Porwollik S."/>
            <person name="Prescott A.M."/>
            <person name="Presecan E."/>
            <person name="Pujic P."/>
            <person name="Purnelle B."/>
            <person name="Rapoport G."/>
            <person name="Rey M."/>
            <person name="Reynolds S."/>
            <person name="Rieger M."/>
            <person name="Rivolta C."/>
            <person name="Rocha E."/>
            <person name="Roche B."/>
            <person name="Rose M."/>
            <person name="Sadaie Y."/>
            <person name="Sato T."/>
            <person name="Scanlan E."/>
            <person name="Schleich S."/>
            <person name="Schroeter R."/>
            <person name="Scoffone F."/>
            <person name="Sekiguchi J."/>
            <person name="Sekowska A."/>
            <person name="Seror S.J."/>
            <person name="Serror P."/>
            <person name="Shin B.-S."/>
            <person name="Soldo B."/>
            <person name="Sorokin A."/>
            <person name="Tacconi E."/>
            <person name="Takagi T."/>
            <person name="Takahashi H."/>
            <person name="Takemaru K."/>
            <person name="Takeuchi M."/>
            <person name="Tamakoshi A."/>
            <person name="Tanaka T."/>
            <person name="Terpstra P."/>
            <person name="Tognoni A."/>
            <person name="Tosato V."/>
            <person name="Uchiyama S."/>
            <person name="Vandenbol M."/>
            <person name="Vannier F."/>
            <person name="Vassarotti A."/>
            <person name="Viari A."/>
            <person name="Wambutt R."/>
            <person name="Wedler E."/>
            <person name="Wedler H."/>
            <person name="Weitzenegger T."/>
            <person name="Winters P."/>
            <person name="Wipat A."/>
            <person name="Yamamoto H."/>
            <person name="Yamane K."/>
            <person name="Yasumoto K."/>
            <person name="Yata K."/>
            <person name="Yoshida K."/>
            <person name="Yoshikawa H.-F."/>
            <person name="Zumstein E."/>
            <person name="Yoshikawa H."/>
            <person name="Danchin A."/>
        </authorList>
    </citation>
    <scope>NUCLEOTIDE SEQUENCE [LARGE SCALE GENOMIC DNA]</scope>
    <source>
        <strain>168</strain>
    </source>
</reference>
<sequence length="580" mass="65767">MGVMKRYMQFVKPYKKQIFVTVLIGIVKFSIPLALPLLLKYVVDDIIQGGGTASDKTTSLFTIMAIMFALFLILRPPVEYYRQYFAQWTASKVLYDIRAKLFDHIQKLSLRFYANTRTGEVISRVINDVEQTKDFVITGLMNIWLDMLTILIVISIMLTLDVKLTLISIVLFPLYGISVKYFYGRLRKLTRERSQALAQVQGHLHERIQGMPVIRSFAIEDHEQAQFNEKNGHFLDKAIRHTNWNAKTFAVVNTITDLAPLIVIACAGYFVINGPLTVGTMVAFVGYIDRMYNPVRRLINSSTTLTQSIASMDRVFEFIDEPYELTDKPNAIKADQIRGGVEFQNVSFQYEKDKENILHDVSLKVNRGETVALVGMSGGGKSTLVSLIPRFYDVTSGRLLIDGTDIRDYEARSLRNQVGMVLQDTFLFSETIRENIAIGKPDATLEEIIEAAKAANAHEFIMSFPEGYETRVGERGVKLSGGQKQRISIARVFLKNPPLLILDEATSALDLESEHYIQEAMDKLAKDRTTFVVAHRLSTITHADKIVVMENGTIIEIGTHDELMDYESQYKHLFTIQNLN</sequence>
<proteinExistence type="inferred from homology"/>
<comment type="function">
    <text evidence="1">May be involved in multidrug export. Transmembrane domains (TMD) form a pore in the cell membrane and the ATP-binding domain (NBD) is responsible for energy generation (By similarity).</text>
</comment>
<comment type="subunit">
    <text evidence="1">Homodimer.</text>
</comment>
<comment type="subcellular location">
    <subcellularLocation>
        <location evidence="1">Cell membrane</location>
        <topology evidence="4">Multi-pass membrane protein</topology>
    </subcellularLocation>
</comment>
<comment type="domain">
    <text>The ATP-binding domain (NBD) and the transmembrane domain (TMD) are fused.</text>
</comment>
<comment type="similarity">
    <text evidence="5">Belongs to the ABC transporter superfamily.</text>
</comment>
<comment type="sequence caution" evidence="5">
    <conflict type="erroneous initiation">
        <sequence resource="EMBL-CDS" id="CAB04797"/>
    </conflict>
    <text>Extended N-terminus.</text>
</comment>
<evidence type="ECO:0000250" key="1"/>
<evidence type="ECO:0000255" key="2"/>
<evidence type="ECO:0000255" key="3">
    <source>
        <dbReference type="PROSITE-ProRule" id="PRU00434"/>
    </source>
</evidence>
<evidence type="ECO:0000255" key="4">
    <source>
        <dbReference type="PROSITE-ProRule" id="PRU00441"/>
    </source>
</evidence>
<evidence type="ECO:0000305" key="5"/>
<name>YGAD_BACSU</name>
<organism>
    <name type="scientific">Bacillus subtilis (strain 168)</name>
    <dbReference type="NCBI Taxonomy" id="224308"/>
    <lineage>
        <taxon>Bacteria</taxon>
        <taxon>Bacillati</taxon>
        <taxon>Bacillota</taxon>
        <taxon>Bacilli</taxon>
        <taxon>Bacillales</taxon>
        <taxon>Bacillaceae</taxon>
        <taxon>Bacillus</taxon>
    </lineage>
</organism>
<protein>
    <recommendedName>
        <fullName>Putative multidrug export ATP-binding/permease protein YgaD</fullName>
        <ecNumber>7.6.2.-</ecNumber>
    </recommendedName>
</protein>
<gene>
    <name type="primary">ygaD</name>
    <name type="ordered locus">BSU08690</name>
</gene>
<accession>P71082</accession>
<accession>Q796Z0</accession>
<feature type="chain" id="PRO_0000360842" description="Putative multidrug export ATP-binding/permease protein YgaD">
    <location>
        <begin position="1"/>
        <end position="580"/>
    </location>
</feature>
<feature type="topological domain" description="Cytoplasmic" evidence="2">
    <location>
        <begin position="1"/>
        <end position="17"/>
    </location>
</feature>
<feature type="transmembrane region" description="Helical" evidence="4">
    <location>
        <begin position="18"/>
        <end position="38"/>
    </location>
</feature>
<feature type="topological domain" description="Extracellular" evidence="2">
    <location>
        <begin position="39"/>
        <end position="57"/>
    </location>
</feature>
<feature type="transmembrane region" description="Helical" evidence="4">
    <location>
        <begin position="58"/>
        <end position="78"/>
    </location>
</feature>
<feature type="topological domain" description="Cytoplasmic" evidence="2">
    <location>
        <begin position="79"/>
        <end position="135"/>
    </location>
</feature>
<feature type="transmembrane region" description="Helical" evidence="4">
    <location>
        <begin position="136"/>
        <end position="156"/>
    </location>
</feature>
<feature type="topological domain" description="Extracellular" evidence="2">
    <location>
        <begin position="157"/>
        <end position="163"/>
    </location>
</feature>
<feature type="transmembrane region" description="Helical" evidence="4">
    <location>
        <begin position="164"/>
        <end position="184"/>
    </location>
</feature>
<feature type="topological domain" description="Cytoplasmic" evidence="2">
    <location>
        <begin position="185"/>
        <end position="243"/>
    </location>
</feature>
<feature type="transmembrane region" description="Helical" evidence="4">
    <location>
        <begin position="244"/>
        <end position="263"/>
    </location>
</feature>
<feature type="topological domain" description="Extracellular" evidence="2">
    <location>
        <begin position="264"/>
        <end position="268"/>
    </location>
</feature>
<feature type="transmembrane region" description="Helical" evidence="4">
    <location>
        <begin position="269"/>
        <end position="288"/>
    </location>
</feature>
<feature type="topological domain" description="Cytoplasmic" evidence="2">
    <location>
        <begin position="289"/>
        <end position="580"/>
    </location>
</feature>
<feature type="domain" description="ABC transmembrane type-1" evidence="4">
    <location>
        <begin position="19"/>
        <end position="307"/>
    </location>
</feature>
<feature type="domain" description="ABC transporter" evidence="3">
    <location>
        <begin position="341"/>
        <end position="576"/>
    </location>
</feature>
<feature type="binding site" evidence="3">
    <location>
        <begin position="375"/>
        <end position="382"/>
    </location>
    <ligand>
        <name>ATP</name>
        <dbReference type="ChEBI" id="CHEBI:30616"/>
    </ligand>
</feature>
<keyword id="KW-0067">ATP-binding</keyword>
<keyword id="KW-1003">Cell membrane</keyword>
<keyword id="KW-0472">Membrane</keyword>
<keyword id="KW-0547">Nucleotide-binding</keyword>
<keyword id="KW-1185">Reference proteome</keyword>
<keyword id="KW-1278">Translocase</keyword>
<keyword id="KW-0812">Transmembrane</keyword>
<keyword id="KW-1133">Transmembrane helix</keyword>
<keyword id="KW-0813">Transport</keyword>